<sequence>MARIAGVNVPNHQHTVIGLTAIYGIGRPRSQKICDTAGVPTTKKVKDLDDNELEKLRDEIAKFIVEGDLRRELSMNIKRLMDLGCYRGMRHRKGLPCRGQRTRTNARTRKGPRKAAQSLKK</sequence>
<gene>
    <name evidence="1" type="primary">rpsM</name>
    <name type="ordered locus">mma_3388</name>
</gene>
<dbReference type="EMBL" id="CP000269">
    <property type="protein sequence ID" value="ABR89177.1"/>
    <property type="molecule type" value="Genomic_DNA"/>
</dbReference>
<dbReference type="RefSeq" id="WP_012081230.1">
    <property type="nucleotide sequence ID" value="NC_009659.1"/>
</dbReference>
<dbReference type="SMR" id="A6T3I1"/>
<dbReference type="STRING" id="375286.mma_3388"/>
<dbReference type="KEGG" id="mms:mma_3388"/>
<dbReference type="eggNOG" id="COG0099">
    <property type="taxonomic scope" value="Bacteria"/>
</dbReference>
<dbReference type="HOGENOM" id="CLU_103849_1_2_4"/>
<dbReference type="OrthoDB" id="9803610at2"/>
<dbReference type="Proteomes" id="UP000006388">
    <property type="component" value="Chromosome"/>
</dbReference>
<dbReference type="GO" id="GO:0005829">
    <property type="term" value="C:cytosol"/>
    <property type="evidence" value="ECO:0007669"/>
    <property type="project" value="TreeGrafter"/>
</dbReference>
<dbReference type="GO" id="GO:0015935">
    <property type="term" value="C:small ribosomal subunit"/>
    <property type="evidence" value="ECO:0007669"/>
    <property type="project" value="TreeGrafter"/>
</dbReference>
<dbReference type="GO" id="GO:0019843">
    <property type="term" value="F:rRNA binding"/>
    <property type="evidence" value="ECO:0007669"/>
    <property type="project" value="UniProtKB-UniRule"/>
</dbReference>
<dbReference type="GO" id="GO:0003735">
    <property type="term" value="F:structural constituent of ribosome"/>
    <property type="evidence" value="ECO:0007669"/>
    <property type="project" value="InterPro"/>
</dbReference>
<dbReference type="GO" id="GO:0000049">
    <property type="term" value="F:tRNA binding"/>
    <property type="evidence" value="ECO:0007669"/>
    <property type="project" value="UniProtKB-UniRule"/>
</dbReference>
<dbReference type="GO" id="GO:0006412">
    <property type="term" value="P:translation"/>
    <property type="evidence" value="ECO:0007669"/>
    <property type="project" value="UniProtKB-UniRule"/>
</dbReference>
<dbReference type="FunFam" id="1.10.8.50:FF:000001">
    <property type="entry name" value="30S ribosomal protein S13"/>
    <property type="match status" value="1"/>
</dbReference>
<dbReference type="FunFam" id="4.10.910.10:FF:000001">
    <property type="entry name" value="30S ribosomal protein S13"/>
    <property type="match status" value="1"/>
</dbReference>
<dbReference type="Gene3D" id="1.10.8.50">
    <property type="match status" value="1"/>
</dbReference>
<dbReference type="Gene3D" id="4.10.910.10">
    <property type="entry name" value="30s ribosomal protein s13, domain 2"/>
    <property type="match status" value="1"/>
</dbReference>
<dbReference type="HAMAP" id="MF_01315">
    <property type="entry name" value="Ribosomal_uS13"/>
    <property type="match status" value="1"/>
</dbReference>
<dbReference type="InterPro" id="IPR027437">
    <property type="entry name" value="Rbsml_uS13_C"/>
</dbReference>
<dbReference type="InterPro" id="IPR001892">
    <property type="entry name" value="Ribosomal_uS13"/>
</dbReference>
<dbReference type="InterPro" id="IPR010979">
    <property type="entry name" value="Ribosomal_uS13-like_H2TH"/>
</dbReference>
<dbReference type="InterPro" id="IPR019980">
    <property type="entry name" value="Ribosomal_uS13_bac-type"/>
</dbReference>
<dbReference type="InterPro" id="IPR018269">
    <property type="entry name" value="Ribosomal_uS13_CS"/>
</dbReference>
<dbReference type="NCBIfam" id="TIGR03631">
    <property type="entry name" value="uS13_bact"/>
    <property type="match status" value="1"/>
</dbReference>
<dbReference type="PANTHER" id="PTHR10871">
    <property type="entry name" value="30S RIBOSOMAL PROTEIN S13/40S RIBOSOMAL PROTEIN S18"/>
    <property type="match status" value="1"/>
</dbReference>
<dbReference type="PANTHER" id="PTHR10871:SF1">
    <property type="entry name" value="SMALL RIBOSOMAL SUBUNIT PROTEIN US13M"/>
    <property type="match status" value="1"/>
</dbReference>
<dbReference type="Pfam" id="PF00416">
    <property type="entry name" value="Ribosomal_S13"/>
    <property type="match status" value="1"/>
</dbReference>
<dbReference type="PIRSF" id="PIRSF002134">
    <property type="entry name" value="Ribosomal_S13"/>
    <property type="match status" value="1"/>
</dbReference>
<dbReference type="SUPFAM" id="SSF46946">
    <property type="entry name" value="S13-like H2TH domain"/>
    <property type="match status" value="1"/>
</dbReference>
<dbReference type="PROSITE" id="PS00646">
    <property type="entry name" value="RIBOSOMAL_S13_1"/>
    <property type="match status" value="1"/>
</dbReference>
<dbReference type="PROSITE" id="PS50159">
    <property type="entry name" value="RIBOSOMAL_S13_2"/>
    <property type="match status" value="1"/>
</dbReference>
<feature type="chain" id="PRO_0000306624" description="Small ribosomal subunit protein uS13">
    <location>
        <begin position="1"/>
        <end position="121"/>
    </location>
</feature>
<feature type="region of interest" description="Disordered" evidence="2">
    <location>
        <begin position="92"/>
        <end position="121"/>
    </location>
</feature>
<name>RS13_JANMA</name>
<comment type="function">
    <text evidence="1">Located at the top of the head of the 30S subunit, it contacts several helices of the 16S rRNA. In the 70S ribosome it contacts the 23S rRNA (bridge B1a) and protein L5 of the 50S subunit (bridge B1b), connecting the 2 subunits; these bridges are implicated in subunit movement. Contacts the tRNAs in the A and P-sites.</text>
</comment>
<comment type="subunit">
    <text evidence="1">Part of the 30S ribosomal subunit. Forms a loose heterodimer with protein S19. Forms two bridges to the 50S subunit in the 70S ribosome.</text>
</comment>
<comment type="similarity">
    <text evidence="1">Belongs to the universal ribosomal protein uS13 family.</text>
</comment>
<organism>
    <name type="scientific">Janthinobacterium sp. (strain Marseille)</name>
    <name type="common">Minibacterium massiliensis</name>
    <dbReference type="NCBI Taxonomy" id="375286"/>
    <lineage>
        <taxon>Bacteria</taxon>
        <taxon>Pseudomonadati</taxon>
        <taxon>Pseudomonadota</taxon>
        <taxon>Betaproteobacteria</taxon>
        <taxon>Burkholderiales</taxon>
        <taxon>Oxalobacteraceae</taxon>
        <taxon>Janthinobacterium</taxon>
    </lineage>
</organism>
<protein>
    <recommendedName>
        <fullName evidence="1">Small ribosomal subunit protein uS13</fullName>
    </recommendedName>
    <alternativeName>
        <fullName evidence="3">30S ribosomal protein S13</fullName>
    </alternativeName>
</protein>
<proteinExistence type="inferred from homology"/>
<evidence type="ECO:0000255" key="1">
    <source>
        <dbReference type="HAMAP-Rule" id="MF_01315"/>
    </source>
</evidence>
<evidence type="ECO:0000256" key="2">
    <source>
        <dbReference type="SAM" id="MobiDB-lite"/>
    </source>
</evidence>
<evidence type="ECO:0000305" key="3"/>
<accession>A6T3I1</accession>
<keyword id="KW-0687">Ribonucleoprotein</keyword>
<keyword id="KW-0689">Ribosomal protein</keyword>
<keyword id="KW-0694">RNA-binding</keyword>
<keyword id="KW-0699">rRNA-binding</keyword>
<keyword id="KW-0820">tRNA-binding</keyword>
<reference key="1">
    <citation type="journal article" date="2007" name="PLoS Genet.">
        <title>Genome analysis of Minibacterium massiliensis highlights the convergent evolution of water-living bacteria.</title>
        <authorList>
            <person name="Audic S."/>
            <person name="Robert C."/>
            <person name="Campagna B."/>
            <person name="Parinello H."/>
            <person name="Claverie J.-M."/>
            <person name="Raoult D."/>
            <person name="Drancourt M."/>
        </authorList>
    </citation>
    <scope>NUCLEOTIDE SEQUENCE [LARGE SCALE GENOMIC DNA]</scope>
    <source>
        <strain>Marseille</strain>
    </source>
</reference>